<feature type="transit peptide" description="Mitochondrion" evidence="1">
    <location>
        <begin position="1"/>
        <end position="21"/>
    </location>
</feature>
<feature type="chain" id="PRO_0000342877" description="Pentatricopeptide repeat-containing protein At1g80550, mitochondrial">
    <location>
        <begin position="22"/>
        <end position="448"/>
    </location>
</feature>
<feature type="repeat" description="PPR 1">
    <location>
        <begin position="80"/>
        <end position="110"/>
    </location>
</feature>
<feature type="repeat" description="PPR 2">
    <location>
        <begin position="116"/>
        <end position="146"/>
    </location>
</feature>
<feature type="repeat" description="PPR 3">
    <location>
        <begin position="150"/>
        <end position="186"/>
    </location>
</feature>
<feature type="repeat" description="PPR 4">
    <location>
        <begin position="188"/>
        <end position="222"/>
    </location>
</feature>
<feature type="repeat" description="PPR 5">
    <location>
        <begin position="223"/>
        <end position="257"/>
    </location>
</feature>
<feature type="repeat" description="PPR 6">
    <location>
        <begin position="258"/>
        <end position="292"/>
    </location>
</feature>
<feature type="repeat" description="PPR 7">
    <location>
        <begin position="293"/>
        <end position="327"/>
    </location>
</feature>
<feature type="repeat" description="PPR 8">
    <location>
        <begin position="331"/>
        <end position="359"/>
    </location>
</feature>
<feature type="repeat" description="PPR 9">
    <location>
        <begin position="360"/>
        <end position="394"/>
    </location>
</feature>
<feature type="repeat" description="PPR 10">
    <location>
        <begin position="395"/>
        <end position="429"/>
    </location>
</feature>
<name>PP136_ARATH</name>
<protein>
    <recommendedName>
        <fullName>Pentatricopeptide repeat-containing protein At1g80550, mitochondrial</fullName>
    </recommendedName>
</protein>
<keyword id="KW-0496">Mitochondrion</keyword>
<keyword id="KW-1185">Reference proteome</keyword>
<keyword id="KW-0677">Repeat</keyword>
<keyword id="KW-0809">Transit peptide</keyword>
<proteinExistence type="evidence at protein level"/>
<accession>Q9M8M3</accession>
<accession>Q8RY77</accession>
<dbReference type="EMBL" id="AC018849">
    <property type="protein sequence ID" value="AAF27119.1"/>
    <property type="molecule type" value="Genomic_DNA"/>
</dbReference>
<dbReference type="EMBL" id="CP002684">
    <property type="protein sequence ID" value="AEE36418.1"/>
    <property type="molecule type" value="Genomic_DNA"/>
</dbReference>
<dbReference type="EMBL" id="AY074541">
    <property type="protein sequence ID" value="AAL69509.1"/>
    <property type="molecule type" value="mRNA"/>
</dbReference>
<dbReference type="PIR" id="E96837">
    <property type="entry name" value="E96837"/>
</dbReference>
<dbReference type="RefSeq" id="NP_178170.1">
    <property type="nucleotide sequence ID" value="NM_106703.2"/>
</dbReference>
<dbReference type="SMR" id="Q9M8M3"/>
<dbReference type="FunCoup" id="Q9M8M3">
    <property type="interactions" value="1536"/>
</dbReference>
<dbReference type="PaxDb" id="3702-AT1G80550.1"/>
<dbReference type="ProteomicsDB" id="249069"/>
<dbReference type="EnsemblPlants" id="AT1G80550.1">
    <property type="protein sequence ID" value="AT1G80550.1"/>
    <property type="gene ID" value="AT1G80550"/>
</dbReference>
<dbReference type="GeneID" id="844394"/>
<dbReference type="Gramene" id="AT1G80550.1">
    <property type="protein sequence ID" value="AT1G80550.1"/>
    <property type="gene ID" value="AT1G80550"/>
</dbReference>
<dbReference type="KEGG" id="ath:AT1G80550"/>
<dbReference type="Araport" id="AT1G80550"/>
<dbReference type="TAIR" id="AT1G80550"/>
<dbReference type="eggNOG" id="KOG4197">
    <property type="taxonomic scope" value="Eukaryota"/>
</dbReference>
<dbReference type="HOGENOM" id="CLU_002706_49_20_1"/>
<dbReference type="InParanoid" id="Q9M8M3"/>
<dbReference type="OMA" id="YSIYMDV"/>
<dbReference type="PhylomeDB" id="Q9M8M3"/>
<dbReference type="PRO" id="PR:Q9M8M3"/>
<dbReference type="Proteomes" id="UP000006548">
    <property type="component" value="Chromosome 1"/>
</dbReference>
<dbReference type="ExpressionAtlas" id="Q9M8M3">
    <property type="expression patterns" value="baseline and differential"/>
</dbReference>
<dbReference type="GO" id="GO:0005739">
    <property type="term" value="C:mitochondrion"/>
    <property type="evidence" value="ECO:0007669"/>
    <property type="project" value="UniProtKB-SubCell"/>
</dbReference>
<dbReference type="Gene3D" id="1.25.40.10">
    <property type="entry name" value="Tetratricopeptide repeat domain"/>
    <property type="match status" value="3"/>
</dbReference>
<dbReference type="InterPro" id="IPR002885">
    <property type="entry name" value="Pentatricopeptide_rpt"/>
</dbReference>
<dbReference type="InterPro" id="IPR011990">
    <property type="entry name" value="TPR-like_helical_dom_sf"/>
</dbReference>
<dbReference type="NCBIfam" id="TIGR00756">
    <property type="entry name" value="PPR"/>
    <property type="match status" value="4"/>
</dbReference>
<dbReference type="PANTHER" id="PTHR47938:SF9">
    <property type="entry name" value="OS10G0422300 PROTEIN"/>
    <property type="match status" value="1"/>
</dbReference>
<dbReference type="PANTHER" id="PTHR47938">
    <property type="entry name" value="RESPIRATORY COMPLEX I CHAPERONE (CIA84), PUTATIVE (AFU_ORTHOLOGUE AFUA_2G06020)-RELATED"/>
    <property type="match status" value="1"/>
</dbReference>
<dbReference type="Pfam" id="PF01535">
    <property type="entry name" value="PPR"/>
    <property type="match status" value="2"/>
</dbReference>
<dbReference type="Pfam" id="PF13041">
    <property type="entry name" value="PPR_2"/>
    <property type="match status" value="2"/>
</dbReference>
<dbReference type="PROSITE" id="PS51375">
    <property type="entry name" value="PPR"/>
    <property type="match status" value="10"/>
</dbReference>
<sequence length="448" mass="52511">MLLLRRLNRVRIASPYSVRLLSVKPISNVDDAKFRSQEEEDQSSYDQKTVCEALTCYSNDWQKALEFFNWVERESGFRHTTETFNRVIDILGKYFEFEISWALINRMIGNTESVPNHVTFRIVFKRYVTAHLVQEAIDAYDKLDDFNLRDETSFYNLVDALCEHKHVVEAEELCFGKNVIGNGFSVSNTKIHNLILRGWSKLGWWGKCKEYWKKMDTEGVTKDLFSYSIYMDIMCKSGKPWKAVKLYKEMKSRRMKLDVVAYNTVIRAIGASQGVEFGIRVFREMRERGCEPNVATHNTIIKLLCEDGRMRDAYRMLDEMPKRGCQPDSITYMCLFSRLEKPSEILSLFGRMIRSGVRPKMDTYVMLMRKFERWGFLQPVLYVWKTMKESGDTPDSAAYNAVIDALIQKGMLDMAREYEEEMIERGLSPRRRPELVEKSLDETLVCRE</sequence>
<organism>
    <name type="scientific">Arabidopsis thaliana</name>
    <name type="common">Mouse-ear cress</name>
    <dbReference type="NCBI Taxonomy" id="3702"/>
    <lineage>
        <taxon>Eukaryota</taxon>
        <taxon>Viridiplantae</taxon>
        <taxon>Streptophyta</taxon>
        <taxon>Embryophyta</taxon>
        <taxon>Tracheophyta</taxon>
        <taxon>Spermatophyta</taxon>
        <taxon>Magnoliopsida</taxon>
        <taxon>eudicotyledons</taxon>
        <taxon>Gunneridae</taxon>
        <taxon>Pentapetalae</taxon>
        <taxon>rosids</taxon>
        <taxon>malvids</taxon>
        <taxon>Brassicales</taxon>
        <taxon>Brassicaceae</taxon>
        <taxon>Camelineae</taxon>
        <taxon>Arabidopsis</taxon>
    </lineage>
</organism>
<comment type="subcellular location">
    <subcellularLocation>
        <location evidence="3">Mitochondrion</location>
    </subcellularLocation>
</comment>
<comment type="similarity">
    <text evidence="2">Belongs to the PPR family. P subfamily.</text>
</comment>
<comment type="online information" name="Pentatricopeptide repeat proteins">
    <link uri="https://ppr.plantenergy.uwa.edu.au"/>
</comment>
<reference key="1">
    <citation type="journal article" date="2000" name="Nature">
        <title>Sequence and analysis of chromosome 1 of the plant Arabidopsis thaliana.</title>
        <authorList>
            <person name="Theologis A."/>
            <person name="Ecker J.R."/>
            <person name="Palm C.J."/>
            <person name="Federspiel N.A."/>
            <person name="Kaul S."/>
            <person name="White O."/>
            <person name="Alonso J."/>
            <person name="Altafi H."/>
            <person name="Araujo R."/>
            <person name="Bowman C.L."/>
            <person name="Brooks S.Y."/>
            <person name="Buehler E."/>
            <person name="Chan A."/>
            <person name="Chao Q."/>
            <person name="Chen H."/>
            <person name="Cheuk R.F."/>
            <person name="Chin C.W."/>
            <person name="Chung M.K."/>
            <person name="Conn L."/>
            <person name="Conway A.B."/>
            <person name="Conway A.R."/>
            <person name="Creasy T.H."/>
            <person name="Dewar K."/>
            <person name="Dunn P."/>
            <person name="Etgu P."/>
            <person name="Feldblyum T.V."/>
            <person name="Feng J.-D."/>
            <person name="Fong B."/>
            <person name="Fujii C.Y."/>
            <person name="Gill J.E."/>
            <person name="Goldsmith A.D."/>
            <person name="Haas B."/>
            <person name="Hansen N.F."/>
            <person name="Hughes B."/>
            <person name="Huizar L."/>
            <person name="Hunter J.L."/>
            <person name="Jenkins J."/>
            <person name="Johnson-Hopson C."/>
            <person name="Khan S."/>
            <person name="Khaykin E."/>
            <person name="Kim C.J."/>
            <person name="Koo H.L."/>
            <person name="Kremenetskaia I."/>
            <person name="Kurtz D.B."/>
            <person name="Kwan A."/>
            <person name="Lam B."/>
            <person name="Langin-Hooper S."/>
            <person name="Lee A."/>
            <person name="Lee J.M."/>
            <person name="Lenz C.A."/>
            <person name="Li J.H."/>
            <person name="Li Y.-P."/>
            <person name="Lin X."/>
            <person name="Liu S.X."/>
            <person name="Liu Z.A."/>
            <person name="Luros J.S."/>
            <person name="Maiti R."/>
            <person name="Marziali A."/>
            <person name="Militscher J."/>
            <person name="Miranda M."/>
            <person name="Nguyen M."/>
            <person name="Nierman W.C."/>
            <person name="Osborne B.I."/>
            <person name="Pai G."/>
            <person name="Peterson J."/>
            <person name="Pham P.K."/>
            <person name="Rizzo M."/>
            <person name="Rooney T."/>
            <person name="Rowley D."/>
            <person name="Sakano H."/>
            <person name="Salzberg S.L."/>
            <person name="Schwartz J.R."/>
            <person name="Shinn P."/>
            <person name="Southwick A.M."/>
            <person name="Sun H."/>
            <person name="Tallon L.J."/>
            <person name="Tambunga G."/>
            <person name="Toriumi M.J."/>
            <person name="Town C.D."/>
            <person name="Utterback T."/>
            <person name="Van Aken S."/>
            <person name="Vaysberg M."/>
            <person name="Vysotskaia V.S."/>
            <person name="Walker M."/>
            <person name="Wu D."/>
            <person name="Yu G."/>
            <person name="Fraser C.M."/>
            <person name="Venter J.C."/>
            <person name="Davis R.W."/>
        </authorList>
    </citation>
    <scope>NUCLEOTIDE SEQUENCE [LARGE SCALE GENOMIC DNA]</scope>
    <source>
        <strain>cv. Columbia</strain>
    </source>
</reference>
<reference key="2">
    <citation type="journal article" date="2017" name="Plant J.">
        <title>Araport11: a complete reannotation of the Arabidopsis thaliana reference genome.</title>
        <authorList>
            <person name="Cheng C.Y."/>
            <person name="Krishnakumar V."/>
            <person name="Chan A.P."/>
            <person name="Thibaud-Nissen F."/>
            <person name="Schobel S."/>
            <person name="Town C.D."/>
        </authorList>
    </citation>
    <scope>GENOME REANNOTATION</scope>
    <source>
        <strain>cv. Columbia</strain>
    </source>
</reference>
<reference key="3">
    <citation type="journal article" date="2003" name="Science">
        <title>Empirical analysis of transcriptional activity in the Arabidopsis genome.</title>
        <authorList>
            <person name="Yamada K."/>
            <person name="Lim J."/>
            <person name="Dale J.M."/>
            <person name="Chen H."/>
            <person name="Shinn P."/>
            <person name="Palm C.J."/>
            <person name="Southwick A.M."/>
            <person name="Wu H.C."/>
            <person name="Kim C.J."/>
            <person name="Nguyen M."/>
            <person name="Pham P.K."/>
            <person name="Cheuk R.F."/>
            <person name="Karlin-Newmann G."/>
            <person name="Liu S.X."/>
            <person name="Lam B."/>
            <person name="Sakano H."/>
            <person name="Wu T."/>
            <person name="Yu G."/>
            <person name="Miranda M."/>
            <person name="Quach H.L."/>
            <person name="Tripp M."/>
            <person name="Chang C.H."/>
            <person name="Lee J.M."/>
            <person name="Toriumi M.J."/>
            <person name="Chan M.M."/>
            <person name="Tang C.C."/>
            <person name="Onodera C.S."/>
            <person name="Deng J.M."/>
            <person name="Akiyama K."/>
            <person name="Ansari Y."/>
            <person name="Arakawa T."/>
            <person name="Banh J."/>
            <person name="Banno F."/>
            <person name="Bowser L."/>
            <person name="Brooks S.Y."/>
            <person name="Carninci P."/>
            <person name="Chao Q."/>
            <person name="Choy N."/>
            <person name="Enju A."/>
            <person name="Goldsmith A.D."/>
            <person name="Gurjal M."/>
            <person name="Hansen N.F."/>
            <person name="Hayashizaki Y."/>
            <person name="Johnson-Hopson C."/>
            <person name="Hsuan V.W."/>
            <person name="Iida K."/>
            <person name="Karnes M."/>
            <person name="Khan S."/>
            <person name="Koesema E."/>
            <person name="Ishida J."/>
            <person name="Jiang P.X."/>
            <person name="Jones T."/>
            <person name="Kawai J."/>
            <person name="Kamiya A."/>
            <person name="Meyers C."/>
            <person name="Nakajima M."/>
            <person name="Narusaka M."/>
            <person name="Seki M."/>
            <person name="Sakurai T."/>
            <person name="Satou M."/>
            <person name="Tamse R."/>
            <person name="Vaysberg M."/>
            <person name="Wallender E.K."/>
            <person name="Wong C."/>
            <person name="Yamamura Y."/>
            <person name="Yuan S."/>
            <person name="Shinozaki K."/>
            <person name="Davis R.W."/>
            <person name="Theologis A."/>
            <person name="Ecker J.R."/>
        </authorList>
    </citation>
    <scope>NUCLEOTIDE SEQUENCE [LARGE SCALE MRNA] OF 129-448</scope>
    <source>
        <strain>cv. Columbia</strain>
    </source>
</reference>
<reference key="4">
    <citation type="journal article" date="2004" name="Plant Cell">
        <title>Genome-wide analysis of Arabidopsis pentatricopeptide repeat proteins reveals their essential role in organelle biogenesis.</title>
        <authorList>
            <person name="Lurin C."/>
            <person name="Andres C."/>
            <person name="Aubourg S."/>
            <person name="Bellaoui M."/>
            <person name="Bitton F."/>
            <person name="Bruyere C."/>
            <person name="Caboche M."/>
            <person name="Debast C."/>
            <person name="Gualberto J."/>
            <person name="Hoffmann B."/>
            <person name="Lecharny A."/>
            <person name="Le Ret M."/>
            <person name="Martin-Magniette M.-L."/>
            <person name="Mireau H."/>
            <person name="Peeters N."/>
            <person name="Renou J.-P."/>
            <person name="Szurek B."/>
            <person name="Taconnat L."/>
            <person name="Small I."/>
        </authorList>
    </citation>
    <scope>GENE FAMILY</scope>
</reference>
<reference key="5">
    <citation type="journal article" date="2015" name="J. Exp. Bot.">
        <title>Identification of cleavage sites and substrate proteins for two mitochondrial intermediate peptidases in Arabidopsis thaliana.</title>
        <authorList>
            <person name="Carrie C."/>
            <person name="Venne A.S."/>
            <person name="Zahedi R.P."/>
            <person name="Soll J."/>
        </authorList>
    </citation>
    <scope>IDENTIFICATION BY MASS SPECTROMETRY</scope>
    <scope>CLEAVAGE OF TRANSIT PEPTIDE AFTER LEU-21</scope>
</reference>
<evidence type="ECO:0000269" key="1">
    <source>
    </source>
</evidence>
<evidence type="ECO:0000305" key="2"/>
<evidence type="ECO:0000305" key="3">
    <source>
    </source>
</evidence>
<gene>
    <name type="ordered locus">At1g80550</name>
    <name type="ORF">T21F11.12</name>
</gene>